<evidence type="ECO:0000255" key="1">
    <source>
        <dbReference type="PROSITE-ProRule" id="PRU01163"/>
    </source>
</evidence>
<organism>
    <name type="scientific">Mycobacterium bovis (strain ATCC BAA-935 / AF2122/97)</name>
    <dbReference type="NCBI Taxonomy" id="233413"/>
    <lineage>
        <taxon>Bacteria</taxon>
        <taxon>Bacillati</taxon>
        <taxon>Actinomycetota</taxon>
        <taxon>Actinomycetes</taxon>
        <taxon>Mycobacteriales</taxon>
        <taxon>Mycobacteriaceae</taxon>
        <taxon>Mycobacterium</taxon>
        <taxon>Mycobacterium tuberculosis complex</taxon>
    </lineage>
</organism>
<dbReference type="EMBL" id="LT708304">
    <property type="protein sequence ID" value="SIT99509.1"/>
    <property type="molecule type" value="Genomic_DNA"/>
</dbReference>
<dbReference type="RefSeq" id="NP_854568.1">
    <property type="nucleotide sequence ID" value="NC_002945.3"/>
</dbReference>
<dbReference type="RefSeq" id="WP_003404633.1">
    <property type="nucleotide sequence ID" value="NC_002945.4"/>
</dbReference>
<dbReference type="SMR" id="P64742"/>
<dbReference type="KEGG" id="mbo:BQ2027_MB0911C"/>
<dbReference type="PATRIC" id="fig|233413.5.peg.991"/>
<dbReference type="Proteomes" id="UP000001419">
    <property type="component" value="Chromosome"/>
</dbReference>
<dbReference type="CDD" id="cd07246">
    <property type="entry name" value="VOC_like"/>
    <property type="match status" value="1"/>
</dbReference>
<dbReference type="Gene3D" id="3.30.720.110">
    <property type="match status" value="1"/>
</dbReference>
<dbReference type="Gene3D" id="3.30.720.120">
    <property type="match status" value="1"/>
</dbReference>
<dbReference type="InterPro" id="IPR029068">
    <property type="entry name" value="Glyas_Bleomycin-R_OHBP_Dase"/>
</dbReference>
<dbReference type="InterPro" id="IPR004360">
    <property type="entry name" value="Glyas_Fos-R_dOase_dom"/>
</dbReference>
<dbReference type="InterPro" id="IPR037523">
    <property type="entry name" value="VOC"/>
</dbReference>
<dbReference type="PANTHER" id="PTHR34109">
    <property type="entry name" value="BNAUNNG04460D PROTEIN-RELATED"/>
    <property type="match status" value="1"/>
</dbReference>
<dbReference type="PANTHER" id="PTHR34109:SF1">
    <property type="entry name" value="VOC DOMAIN-CONTAINING PROTEIN"/>
    <property type="match status" value="1"/>
</dbReference>
<dbReference type="Pfam" id="PF00903">
    <property type="entry name" value="Glyoxalase"/>
    <property type="match status" value="1"/>
</dbReference>
<dbReference type="SUPFAM" id="SSF54593">
    <property type="entry name" value="Glyoxalase/Bleomycin resistance protein/Dihydroxybiphenyl dioxygenase"/>
    <property type="match status" value="1"/>
</dbReference>
<dbReference type="PROSITE" id="PS51819">
    <property type="entry name" value="VOC"/>
    <property type="match status" value="1"/>
</dbReference>
<feature type="chain" id="PRO_0000103730" description="Uncharacterized protein Mb0911c">
    <location>
        <begin position="1"/>
        <end position="152"/>
    </location>
</feature>
<feature type="domain" description="VOC" evidence="1">
    <location>
        <begin position="7"/>
        <end position="133"/>
    </location>
</feature>
<gene>
    <name type="ordered locus">BQ2027_MB0911C</name>
</gene>
<accession>P64742</accession>
<accession>A0A1R3XWR2</accession>
<accession>Q10548</accession>
<accession>X2BGG3</accession>
<name>Y911_MYCBO</name>
<reference key="1">
    <citation type="journal article" date="2003" name="Proc. Natl. Acad. Sci. U.S.A.">
        <title>The complete genome sequence of Mycobacterium bovis.</title>
        <authorList>
            <person name="Garnier T."/>
            <person name="Eiglmeier K."/>
            <person name="Camus J.-C."/>
            <person name="Medina N."/>
            <person name="Mansoor H."/>
            <person name="Pryor M."/>
            <person name="Duthoy S."/>
            <person name="Grondin S."/>
            <person name="Lacroix C."/>
            <person name="Monsempe C."/>
            <person name="Simon S."/>
            <person name="Harris B."/>
            <person name="Atkin R."/>
            <person name="Doggett J."/>
            <person name="Mayes R."/>
            <person name="Keating L."/>
            <person name="Wheeler P.R."/>
            <person name="Parkhill J."/>
            <person name="Barrell B.G."/>
            <person name="Cole S.T."/>
            <person name="Gordon S.V."/>
            <person name="Hewinson R.G."/>
        </authorList>
    </citation>
    <scope>NUCLEOTIDE SEQUENCE [LARGE SCALE GENOMIC DNA]</scope>
    <source>
        <strain>ATCC BAA-935 / AF2122/97</strain>
    </source>
</reference>
<reference key="2">
    <citation type="journal article" date="2017" name="Genome Announc.">
        <title>Updated reference genome sequence and annotation of Mycobacterium bovis AF2122/97.</title>
        <authorList>
            <person name="Malone K.M."/>
            <person name="Farrell D."/>
            <person name="Stuber T.P."/>
            <person name="Schubert O.T."/>
            <person name="Aebersold R."/>
            <person name="Robbe-Austerman S."/>
            <person name="Gordon S.V."/>
        </authorList>
    </citation>
    <scope>NUCLEOTIDE SEQUENCE [LARGE SCALE GENOMIC DNA]</scope>
    <scope>GENOME REANNOTATION</scope>
    <source>
        <strain>ATCC BAA-935 / AF2122/97</strain>
    </source>
</reference>
<sequence>MAINVEPALSPHLVVDDAASAIDFYVKAFDAVELGRVPGPDGKLIHAALRINGFTVMLNDDVPQMCGGKSMTPTSLGGTPVTIHLTVTDVDAKFQRALNAGATVVTALEDQLWGDRYGVVADPFGHHWSLGQPVREVNMDEIQAAMSSQGDG</sequence>
<keyword id="KW-1185">Reference proteome</keyword>
<protein>
    <recommendedName>
        <fullName>Uncharacterized protein Mb0911c</fullName>
    </recommendedName>
</protein>
<proteinExistence type="predicted"/>